<comment type="function">
    <text evidence="1">Involved in the transposition of the insertion sequence IS3.</text>
</comment>
<comment type="similarity">
    <text evidence="3">Belongs to the transposase 8 family.</text>
</comment>
<comment type="sequence caution" evidence="3">
    <conflict type="erroneous initiation">
        <sequence resource="EMBL-CDS" id="AAN42650"/>
    </conflict>
</comment>
<comment type="sequence caution" evidence="3">
    <conflict type="erroneous initiation">
        <sequence resource="EMBL-CDS" id="AAN42782"/>
    </conflict>
</comment>
<comment type="sequence caution" evidence="3">
    <conflict type="erroneous initiation">
        <sequence resource="EMBL-CDS" id="AAN44178"/>
    </conflict>
</comment>
<comment type="sequence caution" evidence="3">
    <conflict type="erroneous initiation">
        <sequence resource="EMBL-CDS" id="AAN44342"/>
    </conflict>
</comment>
<comment type="sequence caution" evidence="3">
    <conflict type="erroneous initiation">
        <sequence resource="EMBL-CDS" id="AAN44486"/>
    </conflict>
</comment>
<keyword id="KW-0233">DNA recombination</keyword>
<keyword id="KW-0238">DNA-binding</keyword>
<keyword id="KW-1185">Reference proteome</keyword>
<keyword id="KW-0814">Transposable element</keyword>
<keyword id="KW-0815">Transposition</keyword>
<evidence type="ECO:0000250" key="1"/>
<evidence type="ECO:0000256" key="2">
    <source>
        <dbReference type="SAM" id="MobiDB-lite"/>
    </source>
</evidence>
<evidence type="ECO:0000305" key="3"/>
<proteinExistence type="inferred from homology"/>
<name>INSE_SHIFL</name>
<accession>P59445</accession>
<accession>Q7TTK5</accession>
<accession>Q81ZJ9</accession>
<reference key="1">
    <citation type="journal article" date="2002" name="Nucleic Acids Res.">
        <title>Genome sequence of Shigella flexneri 2a: insights into pathogenicity through comparison with genomes of Escherichia coli K12 and O157.</title>
        <authorList>
            <person name="Jin Q."/>
            <person name="Yuan Z."/>
            <person name="Xu J."/>
            <person name="Wang Y."/>
            <person name="Shen Y."/>
            <person name="Lu W."/>
            <person name="Wang J."/>
            <person name="Liu H."/>
            <person name="Yang J."/>
            <person name="Yang F."/>
            <person name="Zhang X."/>
            <person name="Zhang J."/>
            <person name="Yang G."/>
            <person name="Wu H."/>
            <person name="Qu D."/>
            <person name="Dong J."/>
            <person name="Sun L."/>
            <person name="Xue Y."/>
            <person name="Zhao A."/>
            <person name="Gao Y."/>
            <person name="Zhu J."/>
            <person name="Kan B."/>
            <person name="Ding K."/>
            <person name="Chen S."/>
            <person name="Cheng H."/>
            <person name="Yao Z."/>
            <person name="He B."/>
            <person name="Chen R."/>
            <person name="Ma D."/>
            <person name="Qiang B."/>
            <person name="Wen Y."/>
            <person name="Hou Y."/>
            <person name="Yu J."/>
        </authorList>
    </citation>
    <scope>NUCLEOTIDE SEQUENCE [LARGE SCALE GENOMIC DNA]</scope>
    <source>
        <strain>301 / Serotype 2a</strain>
    </source>
</reference>
<reference key="2">
    <citation type="journal article" date="2003" name="Infect. Immun.">
        <title>Complete genome sequence and comparative genomics of Shigella flexneri serotype 2a strain 2457T.</title>
        <authorList>
            <person name="Wei J."/>
            <person name="Goldberg M.B."/>
            <person name="Burland V."/>
            <person name="Venkatesan M.M."/>
            <person name="Deng W."/>
            <person name="Fournier G."/>
            <person name="Mayhew G.F."/>
            <person name="Plunkett G. III"/>
            <person name="Rose D.J."/>
            <person name="Darling A."/>
            <person name="Mau B."/>
            <person name="Perna N.T."/>
            <person name="Payne S.M."/>
            <person name="Runyen-Janecky L.J."/>
            <person name="Zhou S."/>
            <person name="Schwartz D.C."/>
            <person name="Blattner F.R."/>
        </authorList>
    </citation>
    <scope>NUCLEOTIDE SEQUENCE [LARGE SCALE GENOMIC DNA]</scope>
    <source>
        <strain>ATCC 700930 / 2457T / Serotype 2a</strain>
    </source>
</reference>
<protein>
    <recommendedName>
        <fullName>Transposase InsE for insertion sequence IS3</fullName>
    </recommendedName>
</protein>
<sequence>MTKTVSTSKKPRKQHSPEFRSEALKLAERIGVTAAARELSLYESQLYNWRSKQQNQQTSSERELEMSTEIARLKRQLAERDEELAILQKAATYFAKRLK</sequence>
<gene>
    <name type="primary">insE1</name>
    <name type="ordered locus">SF1024</name>
    <name type="ordered locus">S1094</name>
</gene>
<gene>
    <name type="primary">insE2</name>
    <name type="ordered locus">SF1166</name>
    <name type="ordered locus">S1253</name>
</gene>
<gene>
    <name type="primary">insE3</name>
    <name type="ordered locus">SF2683</name>
    <name type="ordered locus">S2861</name>
</gene>
<gene>
    <name type="primary">insE4</name>
    <name type="ordered locus">SF2856</name>
    <name type="ordered locus">S3055</name>
</gene>
<gene>
    <name type="primary">insE5</name>
    <name type="ordered locus">SF3005</name>
    <name type="ordered locus">S3209</name>
</gene>
<dbReference type="EMBL" id="AE005674">
    <property type="protein sequence ID" value="AAN42650.1"/>
    <property type="status" value="ALT_INIT"/>
    <property type="molecule type" value="Genomic_DNA"/>
</dbReference>
<dbReference type="EMBL" id="AE005674">
    <property type="protein sequence ID" value="AAN42782.1"/>
    <property type="status" value="ALT_INIT"/>
    <property type="molecule type" value="Genomic_DNA"/>
</dbReference>
<dbReference type="EMBL" id="AE005674">
    <property type="protein sequence ID" value="AAN44178.1"/>
    <property type="status" value="ALT_INIT"/>
    <property type="molecule type" value="Genomic_DNA"/>
</dbReference>
<dbReference type="EMBL" id="AE005674">
    <property type="protein sequence ID" value="AAN44342.1"/>
    <property type="status" value="ALT_INIT"/>
    <property type="molecule type" value="Genomic_DNA"/>
</dbReference>
<dbReference type="EMBL" id="AE005674">
    <property type="protein sequence ID" value="AAN44486.1"/>
    <property type="status" value="ALT_INIT"/>
    <property type="molecule type" value="Genomic_DNA"/>
</dbReference>
<dbReference type="EMBL" id="AE014073">
    <property type="protein sequence ID" value="AAP16534.1"/>
    <property type="molecule type" value="Genomic_DNA"/>
</dbReference>
<dbReference type="EMBL" id="AE014073">
    <property type="protein sequence ID" value="AAP16673.1"/>
    <property type="molecule type" value="Genomic_DNA"/>
</dbReference>
<dbReference type="EMBL" id="AE014073">
    <property type="protein sequence ID" value="AAP18002.1"/>
    <property type="molecule type" value="Genomic_DNA"/>
</dbReference>
<dbReference type="EMBL" id="AE014073">
    <property type="protein sequence ID" value="AAP18168.1"/>
    <property type="molecule type" value="Genomic_DNA"/>
</dbReference>
<dbReference type="EMBL" id="AE014073">
    <property type="protein sequence ID" value="AAP18300.1"/>
    <property type="molecule type" value="Genomic_DNA"/>
</dbReference>
<dbReference type="RefSeq" id="NP_706943.1">
    <property type="nucleotide sequence ID" value="NC_004337.2"/>
</dbReference>
<dbReference type="RefSeq" id="NP_707075.1">
    <property type="nucleotide sequence ID" value="NC_004337.2"/>
</dbReference>
<dbReference type="RefSeq" id="NP_708471.1">
    <property type="nucleotide sequence ID" value="NC_004337.2"/>
</dbReference>
<dbReference type="RefSeq" id="NP_708635.1">
    <property type="nucleotide sequence ID" value="NC_004337.2"/>
</dbReference>
<dbReference type="RefSeq" id="NP_708779.1">
    <property type="nucleotide sequence ID" value="NC_004337.2"/>
</dbReference>
<dbReference type="SMR" id="P59445"/>
<dbReference type="STRING" id="198214.SF1024"/>
<dbReference type="PaxDb" id="198214-SF1024"/>
<dbReference type="GeneID" id="1023962"/>
<dbReference type="GeneID" id="1024108"/>
<dbReference type="GeneID" id="1025689"/>
<dbReference type="GeneID" id="1025827"/>
<dbReference type="GeneID" id="1026617"/>
<dbReference type="KEGG" id="sfl:SF1024"/>
<dbReference type="KEGG" id="sfl:SF1166"/>
<dbReference type="KEGG" id="sfl:SF2683"/>
<dbReference type="KEGG" id="sfl:SF2856"/>
<dbReference type="KEGG" id="sfl:SF3005"/>
<dbReference type="KEGG" id="sfx:S1094"/>
<dbReference type="KEGG" id="sfx:S1253"/>
<dbReference type="KEGG" id="sfx:S2861"/>
<dbReference type="KEGG" id="sfx:S3055"/>
<dbReference type="KEGG" id="sfx:S3209"/>
<dbReference type="PATRIC" id="fig|198214.7.peg.1189"/>
<dbReference type="HOGENOM" id="CLU_027402_18_0_6"/>
<dbReference type="Proteomes" id="UP000001006">
    <property type="component" value="Chromosome"/>
</dbReference>
<dbReference type="Proteomes" id="UP000002673">
    <property type="component" value="Chromosome"/>
</dbReference>
<dbReference type="GO" id="GO:0003677">
    <property type="term" value="F:DNA binding"/>
    <property type="evidence" value="ECO:0007669"/>
    <property type="project" value="UniProtKB-KW"/>
</dbReference>
<dbReference type="GO" id="GO:0004803">
    <property type="term" value="F:transposase activity"/>
    <property type="evidence" value="ECO:0007669"/>
    <property type="project" value="InterPro"/>
</dbReference>
<dbReference type="GO" id="GO:0006313">
    <property type="term" value="P:DNA transposition"/>
    <property type="evidence" value="ECO:0007669"/>
    <property type="project" value="InterPro"/>
</dbReference>
<dbReference type="InterPro" id="IPR009057">
    <property type="entry name" value="Homeodomain-like_sf"/>
</dbReference>
<dbReference type="InterPro" id="IPR051839">
    <property type="entry name" value="RD_transcriptional_regulator"/>
</dbReference>
<dbReference type="InterPro" id="IPR002514">
    <property type="entry name" value="Transposase_8"/>
</dbReference>
<dbReference type="PANTHER" id="PTHR33215">
    <property type="entry name" value="PROTEIN DISTAL ANTENNA"/>
    <property type="match status" value="1"/>
</dbReference>
<dbReference type="PANTHER" id="PTHR33215:SF6">
    <property type="entry name" value="TRANSPOSASE INSE FOR INSERTION SEQUENCE IS3A-RELATED"/>
    <property type="match status" value="1"/>
</dbReference>
<dbReference type="Pfam" id="PF01527">
    <property type="entry name" value="HTH_Tnp_1"/>
    <property type="match status" value="1"/>
</dbReference>
<dbReference type="SUPFAM" id="SSF46689">
    <property type="entry name" value="Homeodomain-like"/>
    <property type="match status" value="1"/>
</dbReference>
<feature type="chain" id="PRO_0000075414" description="Transposase InsE for insertion sequence IS3">
    <location>
        <begin position="1"/>
        <end position="99"/>
    </location>
</feature>
<feature type="region of interest" description="Disordered" evidence="2">
    <location>
        <begin position="1"/>
        <end position="21"/>
    </location>
</feature>
<organism>
    <name type="scientific">Shigella flexneri</name>
    <dbReference type="NCBI Taxonomy" id="623"/>
    <lineage>
        <taxon>Bacteria</taxon>
        <taxon>Pseudomonadati</taxon>
        <taxon>Pseudomonadota</taxon>
        <taxon>Gammaproteobacteria</taxon>
        <taxon>Enterobacterales</taxon>
        <taxon>Enterobacteriaceae</taxon>
        <taxon>Shigella</taxon>
    </lineage>
</organism>